<keyword id="KW-0963">Cytoplasm</keyword>
<keyword id="KW-0444">Lipid biosynthesis</keyword>
<keyword id="KW-0443">Lipid metabolism</keyword>
<keyword id="KW-0520">NAD</keyword>
<keyword id="KW-0521">NADP</keyword>
<keyword id="KW-0547">Nucleotide-binding</keyword>
<keyword id="KW-0560">Oxidoreductase</keyword>
<keyword id="KW-0594">Phospholipid biosynthesis</keyword>
<keyword id="KW-1208">Phospholipid metabolism</keyword>
<sequence length="339" mass="36343">MNQSNASMTVIGAGSYGTALAITLARNGHQVVLWGHDPKHIATLEHDRCNVAFLPDVPFPDTLHLESDLATALAASRNILVVVPSHVFSDVLRQIKPLMRPDARLVWATKGLEAETGRLLQDVAREALGDQIPLAVISGPTFAKELAAGLPTAISLASTDETFADDLQQLLHCGKSFRVYINADFIGVQLGGAVKNVIAIGAGMSDGIGFGANARTALITRGLTEMSRLGAALGADPATFMGMAGLGDLVLTCTDNQSRNRRFGMMLGQGMDVKGAQDKIGQVVEGYRNTKEVRELAHRFGVEMPITEEIYQVLYCGKNAREAALTLLGRARKEELSRH</sequence>
<comment type="function">
    <text evidence="1">Catalyzes the reduction of the glycolytic intermediate dihydroxyacetone phosphate (DHAP) to sn-glycerol 3-phosphate (G3P), the key precursor for phospholipid synthesis.</text>
</comment>
<comment type="catalytic activity">
    <reaction evidence="1">
        <text>sn-glycerol 3-phosphate + NAD(+) = dihydroxyacetone phosphate + NADH + H(+)</text>
        <dbReference type="Rhea" id="RHEA:11092"/>
        <dbReference type="ChEBI" id="CHEBI:15378"/>
        <dbReference type="ChEBI" id="CHEBI:57540"/>
        <dbReference type="ChEBI" id="CHEBI:57597"/>
        <dbReference type="ChEBI" id="CHEBI:57642"/>
        <dbReference type="ChEBI" id="CHEBI:57945"/>
        <dbReference type="EC" id="1.1.1.94"/>
    </reaction>
    <physiologicalReaction direction="right-to-left" evidence="1">
        <dbReference type="Rhea" id="RHEA:11094"/>
    </physiologicalReaction>
</comment>
<comment type="catalytic activity">
    <reaction evidence="1">
        <text>sn-glycerol 3-phosphate + NADP(+) = dihydroxyacetone phosphate + NADPH + H(+)</text>
        <dbReference type="Rhea" id="RHEA:11096"/>
        <dbReference type="ChEBI" id="CHEBI:15378"/>
        <dbReference type="ChEBI" id="CHEBI:57597"/>
        <dbReference type="ChEBI" id="CHEBI:57642"/>
        <dbReference type="ChEBI" id="CHEBI:57783"/>
        <dbReference type="ChEBI" id="CHEBI:58349"/>
        <dbReference type="EC" id="1.1.1.94"/>
    </reaction>
    <physiologicalReaction direction="right-to-left" evidence="1">
        <dbReference type="Rhea" id="RHEA:11098"/>
    </physiologicalReaction>
</comment>
<comment type="pathway">
    <text evidence="1">Membrane lipid metabolism; glycerophospholipid metabolism.</text>
</comment>
<comment type="subcellular location">
    <subcellularLocation>
        <location evidence="1">Cytoplasm</location>
    </subcellularLocation>
</comment>
<comment type="similarity">
    <text evidence="1">Belongs to the NAD-dependent glycerol-3-phosphate dehydrogenase family.</text>
</comment>
<reference key="1">
    <citation type="journal article" date="2008" name="Genome Res.">
        <title>Comparative genome analysis of Salmonella enteritidis PT4 and Salmonella gallinarum 287/91 provides insights into evolutionary and host adaptation pathways.</title>
        <authorList>
            <person name="Thomson N.R."/>
            <person name="Clayton D.J."/>
            <person name="Windhorst D."/>
            <person name="Vernikos G."/>
            <person name="Davidson S."/>
            <person name="Churcher C."/>
            <person name="Quail M.A."/>
            <person name="Stevens M."/>
            <person name="Jones M.A."/>
            <person name="Watson M."/>
            <person name="Barron A."/>
            <person name="Layton A."/>
            <person name="Pickard D."/>
            <person name="Kingsley R.A."/>
            <person name="Bignell A."/>
            <person name="Clark L."/>
            <person name="Harris B."/>
            <person name="Ormond D."/>
            <person name="Abdellah Z."/>
            <person name="Brooks K."/>
            <person name="Cherevach I."/>
            <person name="Chillingworth T."/>
            <person name="Woodward J."/>
            <person name="Norberczak H."/>
            <person name="Lord A."/>
            <person name="Arrowsmith C."/>
            <person name="Jagels K."/>
            <person name="Moule S."/>
            <person name="Mungall K."/>
            <person name="Saunders M."/>
            <person name="Whitehead S."/>
            <person name="Chabalgoity J.A."/>
            <person name="Maskell D."/>
            <person name="Humphreys T."/>
            <person name="Roberts M."/>
            <person name="Barrow P.A."/>
            <person name="Dougan G."/>
            <person name="Parkhill J."/>
        </authorList>
    </citation>
    <scope>NUCLEOTIDE SEQUENCE [LARGE SCALE GENOMIC DNA]</scope>
    <source>
        <strain>P125109</strain>
    </source>
</reference>
<feature type="chain" id="PRO_1000123182" description="Glycerol-3-phosphate dehydrogenase [NAD(P)+]">
    <location>
        <begin position="1"/>
        <end position="339"/>
    </location>
</feature>
<feature type="active site" description="Proton acceptor" evidence="1">
    <location>
        <position position="195"/>
    </location>
</feature>
<feature type="binding site" evidence="1">
    <location>
        <position position="15"/>
    </location>
    <ligand>
        <name>NADPH</name>
        <dbReference type="ChEBI" id="CHEBI:57783"/>
    </ligand>
</feature>
<feature type="binding site" evidence="1">
    <location>
        <position position="16"/>
    </location>
    <ligand>
        <name>NADPH</name>
        <dbReference type="ChEBI" id="CHEBI:57783"/>
    </ligand>
</feature>
<feature type="binding site" evidence="1">
    <location>
        <position position="36"/>
    </location>
    <ligand>
        <name>NADPH</name>
        <dbReference type="ChEBI" id="CHEBI:57783"/>
    </ligand>
</feature>
<feature type="binding site" evidence="1">
    <location>
        <position position="110"/>
    </location>
    <ligand>
        <name>NADPH</name>
        <dbReference type="ChEBI" id="CHEBI:57783"/>
    </ligand>
</feature>
<feature type="binding site" evidence="1">
    <location>
        <position position="110"/>
    </location>
    <ligand>
        <name>sn-glycerol 3-phosphate</name>
        <dbReference type="ChEBI" id="CHEBI:57597"/>
    </ligand>
</feature>
<feature type="binding site" evidence="1">
    <location>
        <position position="139"/>
    </location>
    <ligand>
        <name>sn-glycerol 3-phosphate</name>
        <dbReference type="ChEBI" id="CHEBI:57597"/>
    </ligand>
</feature>
<feature type="binding site" evidence="1">
    <location>
        <position position="141"/>
    </location>
    <ligand>
        <name>sn-glycerol 3-phosphate</name>
        <dbReference type="ChEBI" id="CHEBI:57597"/>
    </ligand>
</feature>
<feature type="binding site" evidence="1">
    <location>
        <position position="143"/>
    </location>
    <ligand>
        <name>NADPH</name>
        <dbReference type="ChEBI" id="CHEBI:57783"/>
    </ligand>
</feature>
<feature type="binding site" evidence="1">
    <location>
        <position position="195"/>
    </location>
    <ligand>
        <name>sn-glycerol 3-phosphate</name>
        <dbReference type="ChEBI" id="CHEBI:57597"/>
    </ligand>
</feature>
<feature type="binding site" evidence="1">
    <location>
        <position position="248"/>
    </location>
    <ligand>
        <name>sn-glycerol 3-phosphate</name>
        <dbReference type="ChEBI" id="CHEBI:57597"/>
    </ligand>
</feature>
<feature type="binding site" evidence="1">
    <location>
        <position position="258"/>
    </location>
    <ligand>
        <name>sn-glycerol 3-phosphate</name>
        <dbReference type="ChEBI" id="CHEBI:57597"/>
    </ligand>
</feature>
<feature type="binding site" evidence="1">
    <location>
        <position position="259"/>
    </location>
    <ligand>
        <name>NADPH</name>
        <dbReference type="ChEBI" id="CHEBI:57783"/>
    </ligand>
</feature>
<feature type="binding site" evidence="1">
    <location>
        <position position="259"/>
    </location>
    <ligand>
        <name>sn-glycerol 3-phosphate</name>
        <dbReference type="ChEBI" id="CHEBI:57597"/>
    </ligand>
</feature>
<feature type="binding site" evidence="1">
    <location>
        <position position="260"/>
    </location>
    <ligand>
        <name>sn-glycerol 3-phosphate</name>
        <dbReference type="ChEBI" id="CHEBI:57597"/>
    </ligand>
</feature>
<feature type="binding site" evidence="1">
    <location>
        <position position="283"/>
    </location>
    <ligand>
        <name>NADPH</name>
        <dbReference type="ChEBI" id="CHEBI:57783"/>
    </ligand>
</feature>
<feature type="binding site" evidence="1">
    <location>
        <position position="285"/>
    </location>
    <ligand>
        <name>NADPH</name>
        <dbReference type="ChEBI" id="CHEBI:57783"/>
    </ligand>
</feature>
<evidence type="ECO:0000255" key="1">
    <source>
        <dbReference type="HAMAP-Rule" id="MF_00394"/>
    </source>
</evidence>
<accession>B5R5D3</accession>
<protein>
    <recommendedName>
        <fullName evidence="1">Glycerol-3-phosphate dehydrogenase [NAD(P)+]</fullName>
        <ecNumber evidence="1">1.1.1.94</ecNumber>
    </recommendedName>
    <alternativeName>
        <fullName evidence="1">NAD(P)(+)-dependent glycerol-3-phosphate dehydrogenase</fullName>
    </alternativeName>
    <alternativeName>
        <fullName evidence="1">NAD(P)H-dependent dihydroxyacetone-phosphate reductase</fullName>
    </alternativeName>
</protein>
<gene>
    <name evidence="1" type="primary">gpsA</name>
    <name type="ordered locus">SEN3522</name>
</gene>
<proteinExistence type="inferred from homology"/>
<name>GPDA_SALEP</name>
<dbReference type="EC" id="1.1.1.94" evidence="1"/>
<dbReference type="EMBL" id="AM933172">
    <property type="protein sequence ID" value="CAR35101.1"/>
    <property type="molecule type" value="Genomic_DNA"/>
</dbReference>
<dbReference type="RefSeq" id="WP_001076596.1">
    <property type="nucleotide sequence ID" value="NC_011294.1"/>
</dbReference>
<dbReference type="SMR" id="B5R5D3"/>
<dbReference type="KEGG" id="set:SEN3522"/>
<dbReference type="HOGENOM" id="CLU_033449_0_2_6"/>
<dbReference type="UniPathway" id="UPA00940"/>
<dbReference type="Proteomes" id="UP000000613">
    <property type="component" value="Chromosome"/>
</dbReference>
<dbReference type="GO" id="GO:0005829">
    <property type="term" value="C:cytosol"/>
    <property type="evidence" value="ECO:0007669"/>
    <property type="project" value="TreeGrafter"/>
</dbReference>
<dbReference type="GO" id="GO:0047952">
    <property type="term" value="F:glycerol-3-phosphate dehydrogenase [NAD(P)+] activity"/>
    <property type="evidence" value="ECO:0007669"/>
    <property type="project" value="UniProtKB-UniRule"/>
</dbReference>
<dbReference type="GO" id="GO:0051287">
    <property type="term" value="F:NAD binding"/>
    <property type="evidence" value="ECO:0007669"/>
    <property type="project" value="InterPro"/>
</dbReference>
<dbReference type="GO" id="GO:0005975">
    <property type="term" value="P:carbohydrate metabolic process"/>
    <property type="evidence" value="ECO:0007669"/>
    <property type="project" value="InterPro"/>
</dbReference>
<dbReference type="GO" id="GO:0046167">
    <property type="term" value="P:glycerol-3-phosphate biosynthetic process"/>
    <property type="evidence" value="ECO:0007669"/>
    <property type="project" value="UniProtKB-UniRule"/>
</dbReference>
<dbReference type="GO" id="GO:0046168">
    <property type="term" value="P:glycerol-3-phosphate catabolic process"/>
    <property type="evidence" value="ECO:0007669"/>
    <property type="project" value="InterPro"/>
</dbReference>
<dbReference type="GO" id="GO:0046474">
    <property type="term" value="P:glycerophospholipid biosynthetic process"/>
    <property type="evidence" value="ECO:0007669"/>
    <property type="project" value="TreeGrafter"/>
</dbReference>
<dbReference type="FunFam" id="1.10.1040.10:FF:000001">
    <property type="entry name" value="Glycerol-3-phosphate dehydrogenase [NAD(P)+]"/>
    <property type="match status" value="1"/>
</dbReference>
<dbReference type="FunFam" id="3.40.50.720:FF:000019">
    <property type="entry name" value="Glycerol-3-phosphate dehydrogenase [NAD(P)+]"/>
    <property type="match status" value="1"/>
</dbReference>
<dbReference type="Gene3D" id="1.10.1040.10">
    <property type="entry name" value="N-(1-d-carboxylethyl)-l-norvaline Dehydrogenase, domain 2"/>
    <property type="match status" value="1"/>
</dbReference>
<dbReference type="Gene3D" id="3.40.50.720">
    <property type="entry name" value="NAD(P)-binding Rossmann-like Domain"/>
    <property type="match status" value="1"/>
</dbReference>
<dbReference type="HAMAP" id="MF_00394">
    <property type="entry name" value="NAD_Glyc3P_dehydrog"/>
    <property type="match status" value="1"/>
</dbReference>
<dbReference type="InterPro" id="IPR008927">
    <property type="entry name" value="6-PGluconate_DH-like_C_sf"/>
</dbReference>
<dbReference type="InterPro" id="IPR013328">
    <property type="entry name" value="6PGD_dom2"/>
</dbReference>
<dbReference type="InterPro" id="IPR006168">
    <property type="entry name" value="G3P_DH_NAD-dep"/>
</dbReference>
<dbReference type="InterPro" id="IPR006109">
    <property type="entry name" value="G3P_DH_NAD-dep_C"/>
</dbReference>
<dbReference type="InterPro" id="IPR011128">
    <property type="entry name" value="G3P_DH_NAD-dep_N"/>
</dbReference>
<dbReference type="InterPro" id="IPR036291">
    <property type="entry name" value="NAD(P)-bd_dom_sf"/>
</dbReference>
<dbReference type="NCBIfam" id="NF000939">
    <property type="entry name" value="PRK00094.1-1"/>
    <property type="match status" value="1"/>
</dbReference>
<dbReference type="NCBIfam" id="NF000940">
    <property type="entry name" value="PRK00094.1-2"/>
    <property type="match status" value="1"/>
</dbReference>
<dbReference type="NCBIfam" id="NF000942">
    <property type="entry name" value="PRK00094.1-4"/>
    <property type="match status" value="1"/>
</dbReference>
<dbReference type="PANTHER" id="PTHR11728">
    <property type="entry name" value="GLYCEROL-3-PHOSPHATE DEHYDROGENASE"/>
    <property type="match status" value="1"/>
</dbReference>
<dbReference type="PANTHER" id="PTHR11728:SF1">
    <property type="entry name" value="GLYCEROL-3-PHOSPHATE DEHYDROGENASE [NAD(+)] 2, CHLOROPLASTIC"/>
    <property type="match status" value="1"/>
</dbReference>
<dbReference type="Pfam" id="PF07479">
    <property type="entry name" value="NAD_Gly3P_dh_C"/>
    <property type="match status" value="1"/>
</dbReference>
<dbReference type="Pfam" id="PF01210">
    <property type="entry name" value="NAD_Gly3P_dh_N"/>
    <property type="match status" value="1"/>
</dbReference>
<dbReference type="PIRSF" id="PIRSF000114">
    <property type="entry name" value="Glycerol-3-P_dh"/>
    <property type="match status" value="1"/>
</dbReference>
<dbReference type="PRINTS" id="PR00077">
    <property type="entry name" value="GPDHDRGNASE"/>
</dbReference>
<dbReference type="SUPFAM" id="SSF48179">
    <property type="entry name" value="6-phosphogluconate dehydrogenase C-terminal domain-like"/>
    <property type="match status" value="1"/>
</dbReference>
<dbReference type="SUPFAM" id="SSF51735">
    <property type="entry name" value="NAD(P)-binding Rossmann-fold domains"/>
    <property type="match status" value="1"/>
</dbReference>
<dbReference type="PROSITE" id="PS00957">
    <property type="entry name" value="NAD_G3PDH"/>
    <property type="match status" value="1"/>
</dbReference>
<organism>
    <name type="scientific">Salmonella enteritidis PT4 (strain P125109)</name>
    <dbReference type="NCBI Taxonomy" id="550537"/>
    <lineage>
        <taxon>Bacteria</taxon>
        <taxon>Pseudomonadati</taxon>
        <taxon>Pseudomonadota</taxon>
        <taxon>Gammaproteobacteria</taxon>
        <taxon>Enterobacterales</taxon>
        <taxon>Enterobacteriaceae</taxon>
        <taxon>Salmonella</taxon>
    </lineage>
</organism>